<proteinExistence type="inferred from homology"/>
<comment type="function">
    <text evidence="1">One of two assembly initiator proteins, it binds directly to the 5'-end of the 23S rRNA, where it nucleates assembly of the 50S subunit.</text>
</comment>
<comment type="function">
    <text evidence="1">One of the proteins that surrounds the polypeptide exit tunnel on the outside of the subunit.</text>
</comment>
<comment type="subunit">
    <text evidence="1">Part of the 50S ribosomal subunit.</text>
</comment>
<comment type="similarity">
    <text evidence="1">Belongs to the universal ribosomal protein uL24 family.</text>
</comment>
<sequence>MKVHVRKNDTVVVISGKDKGKTGEVLRVIPKTGKVVVKGVNLVKKHQKPNRQNMQGGIIEMEAAINSSKVMLFCEKCKKATRISHKLLEDGAKVRVCKKCGETF</sequence>
<reference key="1">
    <citation type="journal article" date="2002" name="Proc. Natl. Acad. Sci. U.S.A.">
        <title>Complete genome sequence of Clostridium perfringens, an anaerobic flesh-eater.</title>
        <authorList>
            <person name="Shimizu T."/>
            <person name="Ohtani K."/>
            <person name="Hirakawa H."/>
            <person name="Ohshima K."/>
            <person name="Yamashita A."/>
            <person name="Shiba T."/>
            <person name="Ogasawara N."/>
            <person name="Hattori M."/>
            <person name="Kuhara S."/>
            <person name="Hayashi H."/>
        </authorList>
    </citation>
    <scope>NUCLEOTIDE SEQUENCE [LARGE SCALE GENOMIC DNA]</scope>
    <source>
        <strain>13 / Type A</strain>
    </source>
</reference>
<gene>
    <name evidence="1" type="primary">rplX</name>
    <name type="ordered locus">CPE2394</name>
</gene>
<dbReference type="EMBL" id="BA000016">
    <property type="protein sequence ID" value="BAB82100.1"/>
    <property type="molecule type" value="Genomic_DNA"/>
</dbReference>
<dbReference type="RefSeq" id="WP_003454257.1">
    <property type="nucleotide sequence ID" value="NC_003366.1"/>
</dbReference>
<dbReference type="SMR" id="Q8XHT4"/>
<dbReference type="STRING" id="195102.gene:10491711"/>
<dbReference type="GeneID" id="93001020"/>
<dbReference type="KEGG" id="cpe:CPE2394"/>
<dbReference type="HOGENOM" id="CLU_093315_2_3_9"/>
<dbReference type="Proteomes" id="UP000000818">
    <property type="component" value="Chromosome"/>
</dbReference>
<dbReference type="GO" id="GO:1990904">
    <property type="term" value="C:ribonucleoprotein complex"/>
    <property type="evidence" value="ECO:0007669"/>
    <property type="project" value="UniProtKB-KW"/>
</dbReference>
<dbReference type="GO" id="GO:0005840">
    <property type="term" value="C:ribosome"/>
    <property type="evidence" value="ECO:0007669"/>
    <property type="project" value="UniProtKB-KW"/>
</dbReference>
<dbReference type="GO" id="GO:0019843">
    <property type="term" value="F:rRNA binding"/>
    <property type="evidence" value="ECO:0007669"/>
    <property type="project" value="UniProtKB-UniRule"/>
</dbReference>
<dbReference type="GO" id="GO:0003735">
    <property type="term" value="F:structural constituent of ribosome"/>
    <property type="evidence" value="ECO:0007669"/>
    <property type="project" value="InterPro"/>
</dbReference>
<dbReference type="GO" id="GO:0006412">
    <property type="term" value="P:translation"/>
    <property type="evidence" value="ECO:0007669"/>
    <property type="project" value="UniProtKB-UniRule"/>
</dbReference>
<dbReference type="CDD" id="cd06089">
    <property type="entry name" value="KOW_RPL26"/>
    <property type="match status" value="1"/>
</dbReference>
<dbReference type="FunFam" id="2.30.30.30:FF:000004">
    <property type="entry name" value="50S ribosomal protein L24"/>
    <property type="match status" value="1"/>
</dbReference>
<dbReference type="Gene3D" id="2.30.30.30">
    <property type="match status" value="1"/>
</dbReference>
<dbReference type="HAMAP" id="MF_01326_B">
    <property type="entry name" value="Ribosomal_uL24_B"/>
    <property type="match status" value="1"/>
</dbReference>
<dbReference type="InterPro" id="IPR005824">
    <property type="entry name" value="KOW"/>
</dbReference>
<dbReference type="InterPro" id="IPR014722">
    <property type="entry name" value="Rib_uL2_dom2"/>
</dbReference>
<dbReference type="InterPro" id="IPR003256">
    <property type="entry name" value="Ribosomal_uL24"/>
</dbReference>
<dbReference type="InterPro" id="IPR005825">
    <property type="entry name" value="Ribosomal_uL24_CS"/>
</dbReference>
<dbReference type="InterPro" id="IPR041988">
    <property type="entry name" value="Ribosomal_uL24_KOW"/>
</dbReference>
<dbReference type="InterPro" id="IPR008991">
    <property type="entry name" value="Translation_prot_SH3-like_sf"/>
</dbReference>
<dbReference type="NCBIfam" id="TIGR01079">
    <property type="entry name" value="rplX_bact"/>
    <property type="match status" value="1"/>
</dbReference>
<dbReference type="PANTHER" id="PTHR12903">
    <property type="entry name" value="MITOCHONDRIAL RIBOSOMAL PROTEIN L24"/>
    <property type="match status" value="1"/>
</dbReference>
<dbReference type="Pfam" id="PF00467">
    <property type="entry name" value="KOW"/>
    <property type="match status" value="1"/>
</dbReference>
<dbReference type="Pfam" id="PF17136">
    <property type="entry name" value="ribosomal_L24"/>
    <property type="match status" value="1"/>
</dbReference>
<dbReference type="SMART" id="SM00739">
    <property type="entry name" value="KOW"/>
    <property type="match status" value="1"/>
</dbReference>
<dbReference type="SUPFAM" id="SSF50104">
    <property type="entry name" value="Translation proteins SH3-like domain"/>
    <property type="match status" value="1"/>
</dbReference>
<dbReference type="PROSITE" id="PS01108">
    <property type="entry name" value="RIBOSOMAL_L24"/>
    <property type="match status" value="1"/>
</dbReference>
<protein>
    <recommendedName>
        <fullName evidence="1">Large ribosomal subunit protein uL24</fullName>
    </recommendedName>
    <alternativeName>
        <fullName evidence="2">50S ribosomal protein L24</fullName>
    </alternativeName>
</protein>
<keyword id="KW-1185">Reference proteome</keyword>
<keyword id="KW-0687">Ribonucleoprotein</keyword>
<keyword id="KW-0689">Ribosomal protein</keyword>
<keyword id="KW-0694">RNA-binding</keyword>
<keyword id="KW-0699">rRNA-binding</keyword>
<evidence type="ECO:0000255" key="1">
    <source>
        <dbReference type="HAMAP-Rule" id="MF_01326"/>
    </source>
</evidence>
<evidence type="ECO:0000305" key="2"/>
<organism>
    <name type="scientific">Clostridium perfringens (strain 13 / Type A)</name>
    <dbReference type="NCBI Taxonomy" id="195102"/>
    <lineage>
        <taxon>Bacteria</taxon>
        <taxon>Bacillati</taxon>
        <taxon>Bacillota</taxon>
        <taxon>Clostridia</taxon>
        <taxon>Eubacteriales</taxon>
        <taxon>Clostridiaceae</taxon>
        <taxon>Clostridium</taxon>
    </lineage>
</organism>
<feature type="chain" id="PRO_0000130647" description="Large ribosomal subunit protein uL24">
    <location>
        <begin position="1"/>
        <end position="104"/>
    </location>
</feature>
<accession>Q8XHT4</accession>
<name>RL24_CLOPE</name>